<organism>
    <name type="scientific">Nitrosomonas europaea (strain ATCC 19718 / CIP 103999 / KCTC 2705 / NBRC 14298)</name>
    <dbReference type="NCBI Taxonomy" id="228410"/>
    <lineage>
        <taxon>Bacteria</taxon>
        <taxon>Pseudomonadati</taxon>
        <taxon>Pseudomonadota</taxon>
        <taxon>Betaproteobacteria</taxon>
        <taxon>Nitrosomonadales</taxon>
        <taxon>Nitrosomonadaceae</taxon>
        <taxon>Nitrosomonas</taxon>
    </lineage>
</organism>
<gene>
    <name evidence="1" type="primary">secA</name>
    <name type="ordered locus">NE0808</name>
</gene>
<feature type="chain" id="PRO_0000320871" description="Protein translocase subunit SecA">
    <location>
        <begin position="1"/>
        <end position="909"/>
    </location>
</feature>
<feature type="region of interest" description="Disordered" evidence="2">
    <location>
        <begin position="857"/>
        <end position="909"/>
    </location>
</feature>
<feature type="compositionally biased region" description="Basic and acidic residues" evidence="2">
    <location>
        <begin position="871"/>
        <end position="889"/>
    </location>
</feature>
<feature type="compositionally biased region" description="Basic residues" evidence="2">
    <location>
        <begin position="899"/>
        <end position="909"/>
    </location>
</feature>
<feature type="binding site" evidence="1">
    <location>
        <position position="87"/>
    </location>
    <ligand>
        <name>ATP</name>
        <dbReference type="ChEBI" id="CHEBI:30616"/>
    </ligand>
</feature>
<feature type="binding site" evidence="1">
    <location>
        <begin position="105"/>
        <end position="109"/>
    </location>
    <ligand>
        <name>ATP</name>
        <dbReference type="ChEBI" id="CHEBI:30616"/>
    </ligand>
</feature>
<feature type="binding site" evidence="1">
    <location>
        <position position="507"/>
    </location>
    <ligand>
        <name>ATP</name>
        <dbReference type="ChEBI" id="CHEBI:30616"/>
    </ligand>
</feature>
<feature type="binding site" evidence="1">
    <location>
        <position position="893"/>
    </location>
    <ligand>
        <name>Zn(2+)</name>
        <dbReference type="ChEBI" id="CHEBI:29105"/>
    </ligand>
</feature>
<feature type="binding site" evidence="1">
    <location>
        <position position="895"/>
    </location>
    <ligand>
        <name>Zn(2+)</name>
        <dbReference type="ChEBI" id="CHEBI:29105"/>
    </ligand>
</feature>
<feature type="binding site" evidence="1">
    <location>
        <position position="904"/>
    </location>
    <ligand>
        <name>Zn(2+)</name>
        <dbReference type="ChEBI" id="CHEBI:29105"/>
    </ligand>
</feature>
<feature type="binding site" evidence="1">
    <location>
        <position position="905"/>
    </location>
    <ligand>
        <name>Zn(2+)</name>
        <dbReference type="ChEBI" id="CHEBI:29105"/>
    </ligand>
</feature>
<keyword id="KW-0067">ATP-binding</keyword>
<keyword id="KW-0997">Cell inner membrane</keyword>
<keyword id="KW-1003">Cell membrane</keyword>
<keyword id="KW-0963">Cytoplasm</keyword>
<keyword id="KW-0472">Membrane</keyword>
<keyword id="KW-0479">Metal-binding</keyword>
<keyword id="KW-0547">Nucleotide-binding</keyword>
<keyword id="KW-0653">Protein transport</keyword>
<keyword id="KW-1185">Reference proteome</keyword>
<keyword id="KW-1278">Translocase</keyword>
<keyword id="KW-0811">Translocation</keyword>
<keyword id="KW-0813">Transport</keyword>
<keyword id="KW-0862">Zinc</keyword>
<name>SECA_NITEU</name>
<accession>Q82W86</accession>
<dbReference type="EC" id="7.4.2.8" evidence="1"/>
<dbReference type="EMBL" id="AL954747">
    <property type="protein sequence ID" value="CAD84719.1"/>
    <property type="molecule type" value="Genomic_DNA"/>
</dbReference>
<dbReference type="RefSeq" id="WP_011111420.1">
    <property type="nucleotide sequence ID" value="NC_004757.1"/>
</dbReference>
<dbReference type="SMR" id="Q82W86"/>
<dbReference type="STRING" id="228410.NE0808"/>
<dbReference type="GeneID" id="87103998"/>
<dbReference type="KEGG" id="neu:NE0808"/>
<dbReference type="eggNOG" id="COG0653">
    <property type="taxonomic scope" value="Bacteria"/>
</dbReference>
<dbReference type="HOGENOM" id="CLU_005314_3_0_4"/>
<dbReference type="OrthoDB" id="9805579at2"/>
<dbReference type="PhylomeDB" id="Q82W86"/>
<dbReference type="Proteomes" id="UP000001416">
    <property type="component" value="Chromosome"/>
</dbReference>
<dbReference type="GO" id="GO:0031522">
    <property type="term" value="C:cell envelope Sec protein transport complex"/>
    <property type="evidence" value="ECO:0007669"/>
    <property type="project" value="TreeGrafter"/>
</dbReference>
<dbReference type="GO" id="GO:0005829">
    <property type="term" value="C:cytosol"/>
    <property type="evidence" value="ECO:0007669"/>
    <property type="project" value="TreeGrafter"/>
</dbReference>
<dbReference type="GO" id="GO:0005886">
    <property type="term" value="C:plasma membrane"/>
    <property type="evidence" value="ECO:0007669"/>
    <property type="project" value="UniProtKB-SubCell"/>
</dbReference>
<dbReference type="GO" id="GO:0005524">
    <property type="term" value="F:ATP binding"/>
    <property type="evidence" value="ECO:0007669"/>
    <property type="project" value="UniProtKB-UniRule"/>
</dbReference>
<dbReference type="GO" id="GO:0046872">
    <property type="term" value="F:metal ion binding"/>
    <property type="evidence" value="ECO:0007669"/>
    <property type="project" value="UniProtKB-KW"/>
</dbReference>
<dbReference type="GO" id="GO:0008564">
    <property type="term" value="F:protein-exporting ATPase activity"/>
    <property type="evidence" value="ECO:0007669"/>
    <property type="project" value="UniProtKB-EC"/>
</dbReference>
<dbReference type="GO" id="GO:0065002">
    <property type="term" value="P:intracellular protein transmembrane transport"/>
    <property type="evidence" value="ECO:0007669"/>
    <property type="project" value="UniProtKB-UniRule"/>
</dbReference>
<dbReference type="GO" id="GO:0017038">
    <property type="term" value="P:protein import"/>
    <property type="evidence" value="ECO:0007669"/>
    <property type="project" value="InterPro"/>
</dbReference>
<dbReference type="GO" id="GO:0006605">
    <property type="term" value="P:protein targeting"/>
    <property type="evidence" value="ECO:0007669"/>
    <property type="project" value="UniProtKB-UniRule"/>
</dbReference>
<dbReference type="GO" id="GO:0043952">
    <property type="term" value="P:protein transport by the Sec complex"/>
    <property type="evidence" value="ECO:0007669"/>
    <property type="project" value="TreeGrafter"/>
</dbReference>
<dbReference type="CDD" id="cd17928">
    <property type="entry name" value="DEXDc_SecA"/>
    <property type="match status" value="1"/>
</dbReference>
<dbReference type="CDD" id="cd18803">
    <property type="entry name" value="SF2_C_secA"/>
    <property type="match status" value="1"/>
</dbReference>
<dbReference type="FunFam" id="3.40.50.300:FF:000081">
    <property type="entry name" value="Preprotein translocase subunit SecA"/>
    <property type="match status" value="1"/>
</dbReference>
<dbReference type="FunFam" id="3.40.50.300:FF:000113">
    <property type="entry name" value="Preprotein translocase subunit SecA"/>
    <property type="match status" value="1"/>
</dbReference>
<dbReference type="FunFam" id="3.90.1440.10:FF:000001">
    <property type="entry name" value="Preprotein translocase subunit SecA"/>
    <property type="match status" value="1"/>
</dbReference>
<dbReference type="FunFam" id="1.10.3060.10:FF:000003">
    <property type="entry name" value="Protein translocase subunit SecA"/>
    <property type="match status" value="1"/>
</dbReference>
<dbReference type="Gene3D" id="1.10.3060.10">
    <property type="entry name" value="Helical scaffold and wing domains of SecA"/>
    <property type="match status" value="1"/>
</dbReference>
<dbReference type="Gene3D" id="3.40.50.300">
    <property type="entry name" value="P-loop containing nucleotide triphosphate hydrolases"/>
    <property type="match status" value="2"/>
</dbReference>
<dbReference type="Gene3D" id="3.90.1440.10">
    <property type="entry name" value="SecA, preprotein cross-linking domain"/>
    <property type="match status" value="1"/>
</dbReference>
<dbReference type="HAMAP" id="MF_01382">
    <property type="entry name" value="SecA"/>
    <property type="match status" value="1"/>
</dbReference>
<dbReference type="InterPro" id="IPR014001">
    <property type="entry name" value="Helicase_ATP-bd"/>
</dbReference>
<dbReference type="InterPro" id="IPR001650">
    <property type="entry name" value="Helicase_C-like"/>
</dbReference>
<dbReference type="InterPro" id="IPR027417">
    <property type="entry name" value="P-loop_NTPase"/>
</dbReference>
<dbReference type="InterPro" id="IPR004027">
    <property type="entry name" value="SEC_C_motif"/>
</dbReference>
<dbReference type="InterPro" id="IPR000185">
    <property type="entry name" value="SecA"/>
</dbReference>
<dbReference type="InterPro" id="IPR020937">
    <property type="entry name" value="SecA_CS"/>
</dbReference>
<dbReference type="InterPro" id="IPR011115">
    <property type="entry name" value="SecA_DEAD"/>
</dbReference>
<dbReference type="InterPro" id="IPR014018">
    <property type="entry name" value="SecA_motor_DEAD"/>
</dbReference>
<dbReference type="InterPro" id="IPR011130">
    <property type="entry name" value="SecA_preprotein_X-link_dom"/>
</dbReference>
<dbReference type="InterPro" id="IPR044722">
    <property type="entry name" value="SecA_SF2_C"/>
</dbReference>
<dbReference type="InterPro" id="IPR011116">
    <property type="entry name" value="SecA_Wing/Scaffold"/>
</dbReference>
<dbReference type="InterPro" id="IPR036266">
    <property type="entry name" value="SecA_Wing/Scaffold_sf"/>
</dbReference>
<dbReference type="InterPro" id="IPR036670">
    <property type="entry name" value="SecA_X-link_sf"/>
</dbReference>
<dbReference type="NCBIfam" id="NF009538">
    <property type="entry name" value="PRK12904.1"/>
    <property type="match status" value="1"/>
</dbReference>
<dbReference type="NCBIfam" id="TIGR00963">
    <property type="entry name" value="secA"/>
    <property type="match status" value="1"/>
</dbReference>
<dbReference type="PANTHER" id="PTHR30612:SF0">
    <property type="entry name" value="CHLOROPLAST PROTEIN-TRANSPORTING ATPASE"/>
    <property type="match status" value="1"/>
</dbReference>
<dbReference type="PANTHER" id="PTHR30612">
    <property type="entry name" value="SECA INNER MEMBRANE COMPONENT OF SEC PROTEIN SECRETION SYSTEM"/>
    <property type="match status" value="1"/>
</dbReference>
<dbReference type="Pfam" id="PF21090">
    <property type="entry name" value="P-loop_SecA"/>
    <property type="match status" value="1"/>
</dbReference>
<dbReference type="Pfam" id="PF02810">
    <property type="entry name" value="SEC-C"/>
    <property type="match status" value="1"/>
</dbReference>
<dbReference type="Pfam" id="PF07517">
    <property type="entry name" value="SecA_DEAD"/>
    <property type="match status" value="1"/>
</dbReference>
<dbReference type="Pfam" id="PF01043">
    <property type="entry name" value="SecA_PP_bind"/>
    <property type="match status" value="1"/>
</dbReference>
<dbReference type="Pfam" id="PF07516">
    <property type="entry name" value="SecA_SW"/>
    <property type="match status" value="1"/>
</dbReference>
<dbReference type="PRINTS" id="PR00906">
    <property type="entry name" value="SECA"/>
</dbReference>
<dbReference type="SMART" id="SM00957">
    <property type="entry name" value="SecA_DEAD"/>
    <property type="match status" value="1"/>
</dbReference>
<dbReference type="SMART" id="SM00958">
    <property type="entry name" value="SecA_PP_bind"/>
    <property type="match status" value="1"/>
</dbReference>
<dbReference type="SUPFAM" id="SSF81886">
    <property type="entry name" value="Helical scaffold and wing domains of SecA"/>
    <property type="match status" value="1"/>
</dbReference>
<dbReference type="SUPFAM" id="SSF52540">
    <property type="entry name" value="P-loop containing nucleoside triphosphate hydrolases"/>
    <property type="match status" value="2"/>
</dbReference>
<dbReference type="SUPFAM" id="SSF81767">
    <property type="entry name" value="Pre-protein crosslinking domain of SecA"/>
    <property type="match status" value="1"/>
</dbReference>
<dbReference type="PROSITE" id="PS01312">
    <property type="entry name" value="SECA"/>
    <property type="match status" value="1"/>
</dbReference>
<dbReference type="PROSITE" id="PS51196">
    <property type="entry name" value="SECA_MOTOR_DEAD"/>
    <property type="match status" value="1"/>
</dbReference>
<comment type="function">
    <text evidence="1">Part of the Sec protein translocase complex. Interacts with the SecYEG preprotein conducting channel. Has a central role in coupling the hydrolysis of ATP to the transfer of proteins into and across the cell membrane, serving both as a receptor for the preprotein-SecB complex and as an ATP-driven molecular motor driving the stepwise translocation of polypeptide chains across the membrane.</text>
</comment>
<comment type="catalytic activity">
    <reaction evidence="1">
        <text>ATP + H2O + cellular proteinSide 1 = ADP + phosphate + cellular proteinSide 2.</text>
        <dbReference type="EC" id="7.4.2.8"/>
    </reaction>
</comment>
<comment type="cofactor">
    <cofactor evidence="1">
        <name>Zn(2+)</name>
        <dbReference type="ChEBI" id="CHEBI:29105"/>
    </cofactor>
    <text evidence="1">May bind 1 zinc ion per subunit.</text>
</comment>
<comment type="subunit">
    <text evidence="1">Monomer and homodimer. Part of the essential Sec protein translocation apparatus which comprises SecA, SecYEG and auxiliary proteins SecDF-YajC and YidC.</text>
</comment>
<comment type="subcellular location">
    <subcellularLocation>
        <location evidence="1">Cell inner membrane</location>
        <topology evidence="1">Peripheral membrane protein</topology>
        <orientation evidence="1">Cytoplasmic side</orientation>
    </subcellularLocation>
    <subcellularLocation>
        <location evidence="1">Cytoplasm</location>
    </subcellularLocation>
    <text evidence="1">Distribution is 50-50.</text>
</comment>
<comment type="similarity">
    <text evidence="1">Belongs to the SecA family.</text>
</comment>
<sequence length="909" mass="103624">MLSNLLKSIFGSRNDRLIKQYLKIVRTINELEAAISPLSDEELRAKTSEFKQRVANGEKLDQLLPEAFAVVREAGKRVLGMRHFDVQLIGGMVLHEGKIAEMRTGEGKTLMATLPTYLNALSGKGVHIVTVNDYLAKRDAEWMGQIYRFLGLTVGVVLSQMPHEEKQAAYAADITYGTNNEYGFDYLRDNMVGHSAERVQRVLNFAIVDEVDSILIDEARTPLIISGMAEGDTEIYKRIDTLIPGLTRQEDEKSPGDYSVDEKTQQVLLSEEGFEHAEKLLSEAGLLSAGSSLYDPMNVSLIHHLNAALRARALYNRDQHYVVQNGEVIIVDEFTGRLMPGRRWSEGLHQAVEAKENVPIQKENQTLASITFQNYFRMYEKLAGMTGTADTEAFEFQQIYGLETVVIPTHRPMTREDRMDQVFRTPQEKYQAIIADIKDCYERKQPVLVGTTSIENNELLAALLTKEKLPHQVLNAKQHAREADIIAQAGQPKMVTIATNMAGRGTDIVLGGNPEQEINRIRADETLDEAAKSKKIEEIHQAWQARHDEVIKLGGLHIIGTERHESRRIDNQLRGRAGRQGDPGSSRFYLSLEDPLLRIFSSDRVANIMTRLKMPEGEAIEHPWVTRAIENAQRKVEARNFDIRKQLLEYDDVANDQRKVIYQQRNELLDAEQGVSETISAIRESVVHQLIDRYIPEQSIEEQWDIPGLEKALASEFHLQIPLQKWLEEDSELHEENLHDRIIELVDTSYLNKVEQVGAPIMHQYERMIMLHSIDTHWREHLAALDHLRQGIHLRGYAQQNPKQEYKREAFELFTSMLDAIKADVTKILMTVQIRSEQQVESVAETSALRNLEYHHDTHSELAEEQPPVAENRENKQQPFVRKNEKVGRNDPCPCGSGKKYKQCHGKLN</sequence>
<evidence type="ECO:0000255" key="1">
    <source>
        <dbReference type="HAMAP-Rule" id="MF_01382"/>
    </source>
</evidence>
<evidence type="ECO:0000256" key="2">
    <source>
        <dbReference type="SAM" id="MobiDB-lite"/>
    </source>
</evidence>
<reference key="1">
    <citation type="journal article" date="2003" name="J. Bacteriol.">
        <title>Complete genome sequence of the ammonia-oxidizing bacterium and obligate chemolithoautotroph Nitrosomonas europaea.</title>
        <authorList>
            <person name="Chain P."/>
            <person name="Lamerdin J.E."/>
            <person name="Larimer F.W."/>
            <person name="Regala W."/>
            <person name="Lao V."/>
            <person name="Land M.L."/>
            <person name="Hauser L."/>
            <person name="Hooper A.B."/>
            <person name="Klotz M.G."/>
            <person name="Norton J."/>
            <person name="Sayavedra-Soto L.A."/>
            <person name="Arciero D.M."/>
            <person name="Hommes N.G."/>
            <person name="Whittaker M.M."/>
            <person name="Arp D.J."/>
        </authorList>
    </citation>
    <scope>NUCLEOTIDE SEQUENCE [LARGE SCALE GENOMIC DNA]</scope>
    <source>
        <strain>ATCC 19718 / CIP 103999 / KCTC 2705 / NBRC 14298</strain>
    </source>
</reference>
<proteinExistence type="inferred from homology"/>
<protein>
    <recommendedName>
        <fullName evidence="1">Protein translocase subunit SecA</fullName>
        <ecNumber evidence="1">7.4.2.8</ecNumber>
    </recommendedName>
</protein>